<name>C42ES_DROME</name>
<evidence type="ECO:0000250" key="1"/>
<evidence type="ECO:0000255" key="2">
    <source>
        <dbReference type="PROSITE-ProRule" id="PRU00057"/>
    </source>
</evidence>
<evidence type="ECO:0000269" key="3">
    <source>
    </source>
</evidence>
<evidence type="ECO:0000305" key="4"/>
<sequence length="85" mass="9586">MASTGEIWLQWFSCCFQQQRSPSRRPHQRLRIDRSMIGNPTNFVHTGHIGSADVELSANRLNAISTQMQSKGGYETNSIHSLHAC</sequence>
<proteinExistence type="evidence at protein level"/>
<keyword id="KW-1003">Cell membrane</keyword>
<keyword id="KW-0133">Cell shape</keyword>
<keyword id="KW-0963">Cytoplasm</keyword>
<keyword id="KW-0206">Cytoskeleton</keyword>
<keyword id="KW-0449">Lipoprotein</keyword>
<keyword id="KW-0472">Membrane</keyword>
<keyword id="KW-0564">Palmitate</keyword>
<keyword id="KW-0597">Phosphoprotein</keyword>
<keyword id="KW-1185">Reference proteome</keyword>
<dbReference type="EMBL" id="AE014297">
    <property type="protein sequence ID" value="AAF51990.2"/>
    <property type="molecule type" value="Genomic_DNA"/>
</dbReference>
<dbReference type="EMBL" id="AY060373">
    <property type="protein sequence ID" value="AAL25412.1"/>
    <property type="molecule type" value="mRNA"/>
</dbReference>
<dbReference type="RefSeq" id="NP_730968.1">
    <property type="nucleotide sequence ID" value="NM_169081.4"/>
</dbReference>
<dbReference type="BioGRID" id="534136">
    <property type="interactions" value="1"/>
</dbReference>
<dbReference type="FunCoup" id="Q9VNE7">
    <property type="interactions" value="970"/>
</dbReference>
<dbReference type="IntAct" id="Q9VNE7">
    <property type="interactions" value="1"/>
</dbReference>
<dbReference type="STRING" id="7227.FBpp0078388"/>
<dbReference type="iPTMnet" id="Q9VNE7"/>
<dbReference type="PaxDb" id="7227-FBpp0078388"/>
<dbReference type="DNASU" id="40685"/>
<dbReference type="EnsemblMetazoa" id="FBtr0078739">
    <property type="protein sequence ID" value="FBpp0078388"/>
    <property type="gene ID" value="FBgn0044823"/>
</dbReference>
<dbReference type="GeneID" id="40685"/>
<dbReference type="KEGG" id="dme:Dmel_CG14672"/>
<dbReference type="UCSC" id="CG14672-RA">
    <property type="organism name" value="d. melanogaster"/>
</dbReference>
<dbReference type="AGR" id="FB:FBgn0044823"/>
<dbReference type="CTD" id="40685"/>
<dbReference type="FlyBase" id="FBgn0044823">
    <property type="gene designation" value="Spec2"/>
</dbReference>
<dbReference type="VEuPathDB" id="VectorBase:FBgn0044823"/>
<dbReference type="eggNOG" id="ENOG502S22R">
    <property type="taxonomic scope" value="Eukaryota"/>
</dbReference>
<dbReference type="HOGENOM" id="CLU_173417_0_0_1"/>
<dbReference type="InParanoid" id="Q9VNE7"/>
<dbReference type="OMA" id="CCIGGQP"/>
<dbReference type="OrthoDB" id="5559822at2759"/>
<dbReference type="PhylomeDB" id="Q9VNE7"/>
<dbReference type="BioGRID-ORCS" id="40685">
    <property type="hits" value="0 hits in 3 CRISPR screens"/>
</dbReference>
<dbReference type="GenomeRNAi" id="40685"/>
<dbReference type="PRO" id="PR:Q9VNE7"/>
<dbReference type="Proteomes" id="UP000000803">
    <property type="component" value="Chromosome 3R"/>
</dbReference>
<dbReference type="Bgee" id="FBgn0044823">
    <property type="expression patterns" value="Expressed in egg cell and 89 other cell types or tissues"/>
</dbReference>
<dbReference type="ExpressionAtlas" id="Q9VNE7">
    <property type="expression patterns" value="baseline and differential"/>
</dbReference>
<dbReference type="GO" id="GO:0005737">
    <property type="term" value="C:cytoplasm"/>
    <property type="evidence" value="ECO:0007669"/>
    <property type="project" value="UniProtKB-KW"/>
</dbReference>
<dbReference type="GO" id="GO:0005856">
    <property type="term" value="C:cytoskeleton"/>
    <property type="evidence" value="ECO:0007669"/>
    <property type="project" value="UniProtKB-SubCell"/>
</dbReference>
<dbReference type="GO" id="GO:0005886">
    <property type="term" value="C:plasma membrane"/>
    <property type="evidence" value="ECO:0000250"/>
    <property type="project" value="UniProtKB"/>
</dbReference>
<dbReference type="GO" id="GO:0035591">
    <property type="term" value="F:signaling adaptor activity"/>
    <property type="evidence" value="ECO:0000250"/>
    <property type="project" value="FlyBase"/>
</dbReference>
<dbReference type="GO" id="GO:0031267">
    <property type="term" value="F:small GTPase binding"/>
    <property type="evidence" value="ECO:0007669"/>
    <property type="project" value="InterPro"/>
</dbReference>
<dbReference type="GO" id="GO:0008360">
    <property type="term" value="P:regulation of cell shape"/>
    <property type="evidence" value="ECO:0007669"/>
    <property type="project" value="UniProtKB-KW"/>
</dbReference>
<dbReference type="GO" id="GO:0035023">
    <property type="term" value="P:regulation of Rho protein signal transduction"/>
    <property type="evidence" value="ECO:0000250"/>
    <property type="project" value="FlyBase"/>
</dbReference>
<dbReference type="GO" id="GO:0009966">
    <property type="term" value="P:regulation of signal transduction"/>
    <property type="evidence" value="ECO:0000250"/>
    <property type="project" value="UniProtKB"/>
</dbReference>
<dbReference type="CDD" id="cd00132">
    <property type="entry name" value="CRIB"/>
    <property type="match status" value="1"/>
</dbReference>
<dbReference type="FunFam" id="3.90.810.10:FF:000004">
    <property type="entry name" value="CDC42 small effector protein 2"/>
    <property type="match status" value="1"/>
</dbReference>
<dbReference type="Gene3D" id="3.90.810.10">
    <property type="entry name" value="CRIB domain"/>
    <property type="match status" value="1"/>
</dbReference>
<dbReference type="InterPro" id="IPR000095">
    <property type="entry name" value="CRIB_dom"/>
</dbReference>
<dbReference type="InterPro" id="IPR036936">
    <property type="entry name" value="CRIB_dom_sf"/>
</dbReference>
<dbReference type="InterPro" id="IPR039056">
    <property type="entry name" value="SPEC"/>
</dbReference>
<dbReference type="PANTHER" id="PTHR13502">
    <property type="entry name" value="CDC42 SMALL EFFECTOR PROTEIN HOMOLOG"/>
    <property type="match status" value="1"/>
</dbReference>
<dbReference type="PANTHER" id="PTHR13502:SF6">
    <property type="entry name" value="CDC42 SMALL EFFECTOR PROTEIN HOMOLOG"/>
    <property type="match status" value="1"/>
</dbReference>
<dbReference type="Pfam" id="PF00786">
    <property type="entry name" value="PBD"/>
    <property type="match status" value="1"/>
</dbReference>
<dbReference type="PROSITE" id="PS50108">
    <property type="entry name" value="CRIB"/>
    <property type="match status" value="1"/>
</dbReference>
<protein>
    <recommendedName>
        <fullName>CDC42 small effector protein homolog</fullName>
        <shortName>Dspec</shortName>
    </recommendedName>
</protein>
<accession>Q9VNE7</accession>
<accession>Q95T20</accession>
<feature type="chain" id="PRO_0000334649" description="CDC42 small effector protein homolog">
    <location>
        <begin position="1"/>
        <end position="85"/>
    </location>
</feature>
<feature type="domain" description="CRIB" evidence="2">
    <location>
        <begin position="37"/>
        <end position="50"/>
    </location>
</feature>
<feature type="modified residue" description="Phosphoserine" evidence="3">
    <location>
        <position position="78"/>
    </location>
</feature>
<feature type="modified residue" description="Phosphoserine" evidence="3">
    <location>
        <position position="81"/>
    </location>
</feature>
<feature type="lipid moiety-binding region" description="S-palmitoyl cysteine" evidence="1">
    <location>
        <position position="14"/>
    </location>
</feature>
<feature type="lipid moiety-binding region" description="S-palmitoyl cysteine" evidence="1">
    <location>
        <position position="15"/>
    </location>
</feature>
<gene>
    <name type="primary">Spec2</name>
    <name type="ORF">CG14672</name>
</gene>
<reference key="1">
    <citation type="journal article" date="2000" name="Science">
        <title>The genome sequence of Drosophila melanogaster.</title>
        <authorList>
            <person name="Adams M.D."/>
            <person name="Celniker S.E."/>
            <person name="Holt R.A."/>
            <person name="Evans C.A."/>
            <person name="Gocayne J.D."/>
            <person name="Amanatides P.G."/>
            <person name="Scherer S.E."/>
            <person name="Li P.W."/>
            <person name="Hoskins R.A."/>
            <person name="Galle R.F."/>
            <person name="George R.A."/>
            <person name="Lewis S.E."/>
            <person name="Richards S."/>
            <person name="Ashburner M."/>
            <person name="Henderson S.N."/>
            <person name="Sutton G.G."/>
            <person name="Wortman J.R."/>
            <person name="Yandell M.D."/>
            <person name="Zhang Q."/>
            <person name="Chen L.X."/>
            <person name="Brandon R.C."/>
            <person name="Rogers Y.-H.C."/>
            <person name="Blazej R.G."/>
            <person name="Champe M."/>
            <person name="Pfeiffer B.D."/>
            <person name="Wan K.H."/>
            <person name="Doyle C."/>
            <person name="Baxter E.G."/>
            <person name="Helt G."/>
            <person name="Nelson C.R."/>
            <person name="Miklos G.L.G."/>
            <person name="Abril J.F."/>
            <person name="Agbayani A."/>
            <person name="An H.-J."/>
            <person name="Andrews-Pfannkoch C."/>
            <person name="Baldwin D."/>
            <person name="Ballew R.M."/>
            <person name="Basu A."/>
            <person name="Baxendale J."/>
            <person name="Bayraktaroglu L."/>
            <person name="Beasley E.M."/>
            <person name="Beeson K.Y."/>
            <person name="Benos P.V."/>
            <person name="Berman B.P."/>
            <person name="Bhandari D."/>
            <person name="Bolshakov S."/>
            <person name="Borkova D."/>
            <person name="Botchan M.R."/>
            <person name="Bouck J."/>
            <person name="Brokstein P."/>
            <person name="Brottier P."/>
            <person name="Burtis K.C."/>
            <person name="Busam D.A."/>
            <person name="Butler H."/>
            <person name="Cadieu E."/>
            <person name="Center A."/>
            <person name="Chandra I."/>
            <person name="Cherry J.M."/>
            <person name="Cawley S."/>
            <person name="Dahlke C."/>
            <person name="Davenport L.B."/>
            <person name="Davies P."/>
            <person name="de Pablos B."/>
            <person name="Delcher A."/>
            <person name="Deng Z."/>
            <person name="Mays A.D."/>
            <person name="Dew I."/>
            <person name="Dietz S.M."/>
            <person name="Dodson K."/>
            <person name="Doup L.E."/>
            <person name="Downes M."/>
            <person name="Dugan-Rocha S."/>
            <person name="Dunkov B.C."/>
            <person name="Dunn P."/>
            <person name="Durbin K.J."/>
            <person name="Evangelista C.C."/>
            <person name="Ferraz C."/>
            <person name="Ferriera S."/>
            <person name="Fleischmann W."/>
            <person name="Fosler C."/>
            <person name="Gabrielian A.E."/>
            <person name="Garg N.S."/>
            <person name="Gelbart W.M."/>
            <person name="Glasser K."/>
            <person name="Glodek A."/>
            <person name="Gong F."/>
            <person name="Gorrell J.H."/>
            <person name="Gu Z."/>
            <person name="Guan P."/>
            <person name="Harris M."/>
            <person name="Harris N.L."/>
            <person name="Harvey D.A."/>
            <person name="Heiman T.J."/>
            <person name="Hernandez J.R."/>
            <person name="Houck J."/>
            <person name="Hostin D."/>
            <person name="Houston K.A."/>
            <person name="Howland T.J."/>
            <person name="Wei M.-H."/>
            <person name="Ibegwam C."/>
            <person name="Jalali M."/>
            <person name="Kalush F."/>
            <person name="Karpen G.H."/>
            <person name="Ke Z."/>
            <person name="Kennison J.A."/>
            <person name="Ketchum K.A."/>
            <person name="Kimmel B.E."/>
            <person name="Kodira C.D."/>
            <person name="Kraft C.L."/>
            <person name="Kravitz S."/>
            <person name="Kulp D."/>
            <person name="Lai Z."/>
            <person name="Lasko P."/>
            <person name="Lei Y."/>
            <person name="Levitsky A.A."/>
            <person name="Li J.H."/>
            <person name="Li Z."/>
            <person name="Liang Y."/>
            <person name="Lin X."/>
            <person name="Liu X."/>
            <person name="Mattei B."/>
            <person name="McIntosh T.C."/>
            <person name="McLeod M.P."/>
            <person name="McPherson D."/>
            <person name="Merkulov G."/>
            <person name="Milshina N.V."/>
            <person name="Mobarry C."/>
            <person name="Morris J."/>
            <person name="Moshrefi A."/>
            <person name="Mount S.M."/>
            <person name="Moy M."/>
            <person name="Murphy B."/>
            <person name="Murphy L."/>
            <person name="Muzny D.M."/>
            <person name="Nelson D.L."/>
            <person name="Nelson D.R."/>
            <person name="Nelson K.A."/>
            <person name="Nixon K."/>
            <person name="Nusskern D.R."/>
            <person name="Pacleb J.M."/>
            <person name="Palazzolo M."/>
            <person name="Pittman G.S."/>
            <person name="Pan S."/>
            <person name="Pollard J."/>
            <person name="Puri V."/>
            <person name="Reese M.G."/>
            <person name="Reinert K."/>
            <person name="Remington K."/>
            <person name="Saunders R.D.C."/>
            <person name="Scheeler F."/>
            <person name="Shen H."/>
            <person name="Shue B.C."/>
            <person name="Siden-Kiamos I."/>
            <person name="Simpson M."/>
            <person name="Skupski M.P."/>
            <person name="Smith T.J."/>
            <person name="Spier E."/>
            <person name="Spradling A.C."/>
            <person name="Stapleton M."/>
            <person name="Strong R."/>
            <person name="Sun E."/>
            <person name="Svirskas R."/>
            <person name="Tector C."/>
            <person name="Turner R."/>
            <person name="Venter E."/>
            <person name="Wang A.H."/>
            <person name="Wang X."/>
            <person name="Wang Z.-Y."/>
            <person name="Wassarman D.A."/>
            <person name="Weinstock G.M."/>
            <person name="Weissenbach J."/>
            <person name="Williams S.M."/>
            <person name="Woodage T."/>
            <person name="Worley K.C."/>
            <person name="Wu D."/>
            <person name="Yang S."/>
            <person name="Yao Q.A."/>
            <person name="Ye J."/>
            <person name="Yeh R.-F."/>
            <person name="Zaveri J.S."/>
            <person name="Zhan M."/>
            <person name="Zhang G."/>
            <person name="Zhao Q."/>
            <person name="Zheng L."/>
            <person name="Zheng X.H."/>
            <person name="Zhong F.N."/>
            <person name="Zhong W."/>
            <person name="Zhou X."/>
            <person name="Zhu S.C."/>
            <person name="Zhu X."/>
            <person name="Smith H.O."/>
            <person name="Gibbs R.A."/>
            <person name="Myers E.W."/>
            <person name="Rubin G.M."/>
            <person name="Venter J.C."/>
        </authorList>
    </citation>
    <scope>NUCLEOTIDE SEQUENCE [LARGE SCALE GENOMIC DNA]</scope>
    <source>
        <strain>Berkeley</strain>
    </source>
</reference>
<reference key="2">
    <citation type="journal article" date="2002" name="Genome Biol.">
        <title>Annotation of the Drosophila melanogaster euchromatic genome: a systematic review.</title>
        <authorList>
            <person name="Misra S."/>
            <person name="Crosby M.A."/>
            <person name="Mungall C.J."/>
            <person name="Matthews B.B."/>
            <person name="Campbell K.S."/>
            <person name="Hradecky P."/>
            <person name="Huang Y."/>
            <person name="Kaminker J.S."/>
            <person name="Millburn G.H."/>
            <person name="Prochnik S.E."/>
            <person name="Smith C.D."/>
            <person name="Tupy J.L."/>
            <person name="Whitfield E.J."/>
            <person name="Bayraktaroglu L."/>
            <person name="Berman B.P."/>
            <person name="Bettencourt B.R."/>
            <person name="Celniker S.E."/>
            <person name="de Grey A.D.N.J."/>
            <person name="Drysdale R.A."/>
            <person name="Harris N.L."/>
            <person name="Richter J."/>
            <person name="Russo S."/>
            <person name="Schroeder A.J."/>
            <person name="Shu S.Q."/>
            <person name="Stapleton M."/>
            <person name="Yamada C."/>
            <person name="Ashburner M."/>
            <person name="Gelbart W.M."/>
            <person name="Rubin G.M."/>
            <person name="Lewis S.E."/>
        </authorList>
    </citation>
    <scope>GENOME REANNOTATION</scope>
    <source>
        <strain>Berkeley</strain>
    </source>
</reference>
<reference key="3">
    <citation type="journal article" date="2002" name="Genome Biol.">
        <title>A Drosophila full-length cDNA resource.</title>
        <authorList>
            <person name="Stapleton M."/>
            <person name="Carlson J.W."/>
            <person name="Brokstein P."/>
            <person name="Yu C."/>
            <person name="Champe M."/>
            <person name="George R.A."/>
            <person name="Guarin H."/>
            <person name="Kronmiller B."/>
            <person name="Pacleb J.M."/>
            <person name="Park S."/>
            <person name="Wan K.H."/>
            <person name="Rubin G.M."/>
            <person name="Celniker S.E."/>
        </authorList>
    </citation>
    <scope>NUCLEOTIDE SEQUENCE [LARGE SCALE MRNA]</scope>
    <source>
        <strain>Berkeley</strain>
        <tissue>Embryo</tissue>
    </source>
</reference>
<reference key="4">
    <citation type="journal article" date="2008" name="J. Proteome Res.">
        <title>Phosphoproteome analysis of Drosophila melanogaster embryos.</title>
        <authorList>
            <person name="Zhai B."/>
            <person name="Villen J."/>
            <person name="Beausoleil S.A."/>
            <person name="Mintseris J."/>
            <person name="Gygi S.P."/>
        </authorList>
    </citation>
    <scope>PHOSPHORYLATION [LARGE SCALE ANALYSIS] AT SER-78 AND SER-81</scope>
    <scope>IDENTIFICATION BY MASS SPECTROMETRY</scope>
    <source>
        <tissue>Embryo</tissue>
    </source>
</reference>
<organism>
    <name type="scientific">Drosophila melanogaster</name>
    <name type="common">Fruit fly</name>
    <dbReference type="NCBI Taxonomy" id="7227"/>
    <lineage>
        <taxon>Eukaryota</taxon>
        <taxon>Metazoa</taxon>
        <taxon>Ecdysozoa</taxon>
        <taxon>Arthropoda</taxon>
        <taxon>Hexapoda</taxon>
        <taxon>Insecta</taxon>
        <taxon>Pterygota</taxon>
        <taxon>Neoptera</taxon>
        <taxon>Endopterygota</taxon>
        <taxon>Diptera</taxon>
        <taxon>Brachycera</taxon>
        <taxon>Muscomorpha</taxon>
        <taxon>Ephydroidea</taxon>
        <taxon>Drosophilidae</taxon>
        <taxon>Drosophila</taxon>
        <taxon>Sophophora</taxon>
    </lineage>
</organism>
<comment type="function">
    <text evidence="1">Probably involved in the organization of the actin cytoskeleton by acting downstream of CDC42, inducing actin filament assembly.</text>
</comment>
<comment type="subcellular location">
    <subcellularLocation>
        <location evidence="1">Cytoplasm</location>
        <location evidence="1">Cytoskeleton</location>
    </subcellularLocation>
    <subcellularLocation>
        <location evidence="1">Cell membrane</location>
        <topology evidence="1">Lipid-anchor</topology>
    </subcellularLocation>
</comment>
<comment type="similarity">
    <text evidence="4">Belongs to the CDC42SE/SPEC family.</text>
</comment>